<keyword id="KW-0007">Acetylation</keyword>
<keyword id="KW-1185">Reference proteome</keyword>
<evidence type="ECO:0000269" key="1">
    <source>
    </source>
</evidence>
<evidence type="ECO:0000269" key="2">
    <source>
    </source>
</evidence>
<evidence type="ECO:0000305" key="3"/>
<organism>
    <name type="scientific">Escherichia coli (strain K12)</name>
    <dbReference type="NCBI Taxonomy" id="83333"/>
    <lineage>
        <taxon>Bacteria</taxon>
        <taxon>Pseudomonadati</taxon>
        <taxon>Pseudomonadota</taxon>
        <taxon>Gammaproteobacteria</taxon>
        <taxon>Enterobacterales</taxon>
        <taxon>Enterobacteriaceae</taxon>
        <taxon>Escherichia</taxon>
    </lineage>
</organism>
<dbReference type="EMBL" id="U14003">
    <property type="protein sequence ID" value="AAA97148.1"/>
    <property type="status" value="ALT_INIT"/>
    <property type="molecule type" value="Genomic_DNA"/>
</dbReference>
<dbReference type="EMBL" id="U00096">
    <property type="protein sequence ID" value="AAC77209.2"/>
    <property type="molecule type" value="Genomic_DNA"/>
</dbReference>
<dbReference type="EMBL" id="AP009048">
    <property type="protein sequence ID" value="BAE78249.1"/>
    <property type="molecule type" value="Genomic_DNA"/>
</dbReference>
<dbReference type="PIR" id="S56477">
    <property type="entry name" value="S56477"/>
</dbReference>
<dbReference type="RefSeq" id="NP_418673.4">
    <property type="nucleotide sequence ID" value="NC_000913.3"/>
</dbReference>
<dbReference type="RefSeq" id="WP_000583469.1">
    <property type="nucleotide sequence ID" value="NZ_LN832404.1"/>
</dbReference>
<dbReference type="SMR" id="P0AF96"/>
<dbReference type="BioGRID" id="4259562">
    <property type="interactions" value="213"/>
</dbReference>
<dbReference type="DIP" id="DIP-48214N"/>
<dbReference type="FunCoup" id="P0AF96">
    <property type="interactions" value="26"/>
</dbReference>
<dbReference type="STRING" id="511145.b4252"/>
<dbReference type="iPTMnet" id="P0AF96"/>
<dbReference type="jPOST" id="P0AF96"/>
<dbReference type="PaxDb" id="511145-b4252"/>
<dbReference type="EnsemblBacteria" id="AAC77209">
    <property type="protein sequence ID" value="AAC77209"/>
    <property type="gene ID" value="b4252"/>
</dbReference>
<dbReference type="GeneID" id="948777"/>
<dbReference type="KEGG" id="ecj:JW5756"/>
<dbReference type="KEGG" id="eco:b4252"/>
<dbReference type="KEGG" id="ecoc:C3026_22940"/>
<dbReference type="PATRIC" id="fig|1411691.4.peg.2452"/>
<dbReference type="EchoBASE" id="EB2420"/>
<dbReference type="eggNOG" id="COG2731">
    <property type="taxonomic scope" value="Bacteria"/>
</dbReference>
<dbReference type="HOGENOM" id="CLU_107139_3_0_6"/>
<dbReference type="InParanoid" id="P0AF96"/>
<dbReference type="OMA" id="CLIKVLM"/>
<dbReference type="OrthoDB" id="6196468at2"/>
<dbReference type="PhylomeDB" id="P0AF96"/>
<dbReference type="BioCyc" id="EcoCyc:G7883-MONOMER"/>
<dbReference type="PRO" id="PR:P0AF96"/>
<dbReference type="Proteomes" id="UP000000625">
    <property type="component" value="Chromosome"/>
</dbReference>
<dbReference type="GO" id="GO:0005829">
    <property type="term" value="C:cytosol"/>
    <property type="evidence" value="ECO:0000314"/>
    <property type="project" value="EcoCyc"/>
</dbReference>
<dbReference type="GO" id="GO:0044010">
    <property type="term" value="P:single-species biofilm formation"/>
    <property type="evidence" value="ECO:0000315"/>
    <property type="project" value="EcoCyc"/>
</dbReference>
<dbReference type="FunFam" id="2.60.120.370:FF:000002">
    <property type="entry name" value="YhcH/YjgK/YiaL family protein"/>
    <property type="match status" value="1"/>
</dbReference>
<dbReference type="Gene3D" id="2.60.120.370">
    <property type="entry name" value="YhcH/YjgK/YiaL"/>
    <property type="match status" value="1"/>
</dbReference>
<dbReference type="InterPro" id="IPR004375">
    <property type="entry name" value="NanQ/TabA/YiaL"/>
</dbReference>
<dbReference type="InterPro" id="IPR037012">
    <property type="entry name" value="NanQ/TabA/YiaL_sf"/>
</dbReference>
<dbReference type="NCBIfam" id="TIGR00022">
    <property type="entry name" value="YhcH/YjgK/YiaL family protein"/>
    <property type="match status" value="1"/>
</dbReference>
<dbReference type="PANTHER" id="PTHR34986">
    <property type="entry name" value="EVOLVED BETA-GALACTOSIDASE SUBUNIT BETA"/>
    <property type="match status" value="1"/>
</dbReference>
<dbReference type="PANTHER" id="PTHR34986:SF4">
    <property type="entry name" value="EVOLVED BETA-GALACTOSIDASE SUBUNIT BETA-RELATED"/>
    <property type="match status" value="1"/>
</dbReference>
<dbReference type="Pfam" id="PF04074">
    <property type="entry name" value="DUF386"/>
    <property type="match status" value="1"/>
</dbReference>
<dbReference type="SUPFAM" id="SSF51197">
    <property type="entry name" value="Clavaminate synthase-like"/>
    <property type="match status" value="1"/>
</dbReference>
<reference key="1">
    <citation type="journal article" date="1995" name="Nucleic Acids Res.">
        <title>Analysis of the Escherichia coli genome VI: DNA sequence of the region from 92.8 through 100 minutes.</title>
        <authorList>
            <person name="Burland V.D."/>
            <person name="Plunkett G. III"/>
            <person name="Sofia H.J."/>
            <person name="Daniels D.L."/>
            <person name="Blattner F.R."/>
        </authorList>
    </citation>
    <scope>NUCLEOTIDE SEQUENCE [LARGE SCALE GENOMIC DNA]</scope>
    <source>
        <strain>K12 / MG1655 / ATCC 47076</strain>
    </source>
</reference>
<reference key="2">
    <citation type="journal article" date="1997" name="Science">
        <title>The complete genome sequence of Escherichia coli K-12.</title>
        <authorList>
            <person name="Blattner F.R."/>
            <person name="Plunkett G. III"/>
            <person name="Bloch C.A."/>
            <person name="Perna N.T."/>
            <person name="Burland V."/>
            <person name="Riley M."/>
            <person name="Collado-Vides J."/>
            <person name="Glasner J.D."/>
            <person name="Rode C.K."/>
            <person name="Mayhew G.F."/>
            <person name="Gregor J."/>
            <person name="Davis N.W."/>
            <person name="Kirkpatrick H.A."/>
            <person name="Goeden M.A."/>
            <person name="Rose D.J."/>
            <person name="Mau B."/>
            <person name="Shao Y."/>
        </authorList>
    </citation>
    <scope>NUCLEOTIDE SEQUENCE [LARGE SCALE GENOMIC DNA]</scope>
    <source>
        <strain>K12 / MG1655 / ATCC 47076</strain>
    </source>
</reference>
<reference key="3">
    <citation type="journal article" date="2006" name="Mol. Syst. Biol.">
        <title>Highly accurate genome sequences of Escherichia coli K-12 strains MG1655 and W3110.</title>
        <authorList>
            <person name="Hayashi K."/>
            <person name="Morooka N."/>
            <person name="Yamamoto Y."/>
            <person name="Fujita K."/>
            <person name="Isono K."/>
            <person name="Choi S."/>
            <person name="Ohtsubo E."/>
            <person name="Baba T."/>
            <person name="Wanner B.L."/>
            <person name="Mori H."/>
            <person name="Horiuchi T."/>
        </authorList>
    </citation>
    <scope>NUCLEOTIDE SEQUENCE [LARGE SCALE GENOMIC DNA]</scope>
    <source>
        <strain>K12 / W3110 / ATCC 27325 / DSM 5911</strain>
    </source>
</reference>
<reference key="4">
    <citation type="journal article" date="1999" name="Electrophoresis">
        <title>Enrichment of low abundance proteins of Escherichia coli by hydroxyapatite chromatography.</title>
        <authorList>
            <person name="Fountoulakis M."/>
            <person name="Takacs M.-F."/>
            <person name="Berndt P."/>
            <person name="Langen H."/>
            <person name="Takacs B."/>
        </authorList>
    </citation>
    <scope>IDENTIFICATION BY MASS SPECTROMETRY</scope>
    <source>
        <strain>B / BL21</strain>
    </source>
</reference>
<reference key="5">
    <citation type="journal article" date="2009" name="J. Bacteriol.">
        <title>Toxin-antitoxin systems in Escherichia coli influence biofilm formation through YjgK (TabA) and fimbriae.</title>
        <authorList>
            <person name="Kim Y."/>
            <person name="Wang X."/>
            <person name="Ma Q."/>
            <person name="Zhang X.S."/>
            <person name="Wood T.K."/>
        </authorList>
    </citation>
    <scope>FUNCTION</scope>
    <scope>INDUCTION</scope>
    <scope>DISRUPTION PHENOTYPE</scope>
    <scope>GENE NAME</scope>
    <source>
        <strain>K12 / MG1655 / ATCC 47076</strain>
    </source>
</reference>
<reference key="6">
    <citation type="journal article" date="2009" name="Mol. Cell. Proteomics">
        <title>Lysine acetylation is a highly abundant and evolutionarily conserved modification in Escherichia coli.</title>
        <authorList>
            <person name="Zhang J."/>
            <person name="Sprung R."/>
            <person name="Pei J."/>
            <person name="Tan X."/>
            <person name="Kim S."/>
            <person name="Zhu H."/>
            <person name="Liu C.F."/>
            <person name="Grishin N.V."/>
            <person name="Zhao Y."/>
        </authorList>
    </citation>
    <scope>ACETYLATION [LARGE SCALE ANALYSIS] AT LYS-36</scope>
    <scope>IDENTIFICATION BY MASS SPECTROMETRY</scope>
    <source>
        <strain>K12 / JW1106</strain>
        <strain>K12 / MG1655 / ATCC 47076</strain>
    </source>
</reference>
<gene>
    <name type="primary">tabA</name>
    <name type="synonym">yjgK</name>
    <name type="ordered locus">b4252</name>
    <name type="ordered locus">JW5756</name>
</gene>
<accession>P0AF96</accession>
<accession>P39335</accession>
<accession>Q2M657</accession>
<feature type="chain" id="PRO_0000169765" description="Toxin-antitoxin biofilm protein TabA">
    <location>
        <begin position="1"/>
        <end position="150"/>
    </location>
</feature>
<feature type="modified residue" description="N6-acetyllysine" evidence="1">
    <location>
        <position position="36"/>
    </location>
</feature>
<proteinExistence type="evidence at protein level"/>
<sequence>MIIGNIHNLQPWLPQELRQAIEHIKAHVTAETPKGKHDIEGNRLFYLISEDMTEPYEARRAEYHARYLDIQIVLKGQEGMTFSTQPAGAPDTDWLADKDIAFLPEGVDEKTVILNEGDFVVFYPGEVHKPLCAVGAPAQVRKAVVKMLMA</sequence>
<name>TABA_ECOLI</name>
<comment type="function">
    <text evidence="2">Influences biofilm formation. Represses fimbria genes in 8 hours biofilms. May act in response to the combined activity of several toxin-antitoxin (TA) systems.</text>
</comment>
<comment type="induction">
    <text evidence="2">Induced by simultaneous deletion of five TA systems (MazF/MazE, RelE/RelB, ChpB, YoeB/YefM, and YafQ/DinJ).</text>
</comment>
<comment type="disruption phenotype">
    <text evidence="2">Deletion increases biofilm formation after 8 hours and decreases biofilm formation after 24 hours.</text>
</comment>
<comment type="similarity">
    <text evidence="3">Belongs to the TabA/YiaL family.</text>
</comment>
<comment type="sequence caution" evidence="3">
    <conflict type="erroneous initiation">
        <sequence resource="EMBL-CDS" id="AAA97148"/>
    </conflict>
    <text>Extended N-terminus.</text>
</comment>
<protein>
    <recommendedName>
        <fullName>Toxin-antitoxin biofilm protein TabA</fullName>
    </recommendedName>
</protein>